<comment type="function">
    <text evidence="1">Catalyzes the conversion of 4-hydroxyphenylpyruvic acid to homogentisic acid, one of the steps in tyrosine catabolism.</text>
</comment>
<comment type="catalytic activity">
    <reaction evidence="1">
        <text>3-(4-hydroxyphenyl)pyruvate + O2 = homogentisate + CO2</text>
        <dbReference type="Rhea" id="RHEA:16189"/>
        <dbReference type="ChEBI" id="CHEBI:15379"/>
        <dbReference type="ChEBI" id="CHEBI:16169"/>
        <dbReference type="ChEBI" id="CHEBI:16526"/>
        <dbReference type="ChEBI" id="CHEBI:36242"/>
        <dbReference type="EC" id="1.13.11.27"/>
    </reaction>
    <physiologicalReaction direction="left-to-right" evidence="1">
        <dbReference type="Rhea" id="RHEA:16190"/>
    </physiologicalReaction>
</comment>
<comment type="cofactor">
    <cofactor evidence="1">
        <name>Fe cation</name>
        <dbReference type="ChEBI" id="CHEBI:24875"/>
    </cofactor>
    <text evidence="1">Binds 1 Fe cation per subunit.</text>
</comment>
<comment type="pathway">
    <text>Amino-acid degradation; L-phenylalanine degradation; acetoacetate and fumarate from L-phenylalanine: step 3/6.</text>
</comment>
<comment type="subunit">
    <text evidence="1">Homodimer.</text>
</comment>
<comment type="subcellular location">
    <subcellularLocation>
        <location evidence="1">Cytoplasm</location>
    </subcellularLocation>
    <subcellularLocation>
        <location evidence="1">Endoplasmic reticulum membrane</location>
        <topology evidence="1">Peripheral membrane protein</topology>
    </subcellularLocation>
    <subcellularLocation>
        <location evidence="1">Golgi apparatus membrane</location>
        <topology evidence="1">Peripheral membrane protein</topology>
    </subcellularLocation>
</comment>
<comment type="similarity">
    <text evidence="3">Belongs to the 4HPPD family.</text>
</comment>
<dbReference type="EC" id="1.13.11.27" evidence="1"/>
<dbReference type="EMBL" id="AY398361">
    <property type="protein sequence ID" value="AAQ97794.1"/>
    <property type="molecule type" value="mRNA"/>
</dbReference>
<dbReference type="SMR" id="Q6TGZ5"/>
<dbReference type="FunCoup" id="Q6TGZ5">
    <property type="interactions" value="82"/>
</dbReference>
<dbReference type="STRING" id="7955.ENSDARP00000016115"/>
<dbReference type="PaxDb" id="7955-ENSDARP00000016115"/>
<dbReference type="AGR" id="ZFIN:ZDB-GENE-040426-986"/>
<dbReference type="ZFIN" id="ZDB-GENE-040426-986">
    <property type="gene designation" value="hpda"/>
</dbReference>
<dbReference type="eggNOG" id="KOG0638">
    <property type="taxonomic scope" value="Eukaryota"/>
</dbReference>
<dbReference type="InParanoid" id="Q6TGZ5"/>
<dbReference type="PhylomeDB" id="Q6TGZ5"/>
<dbReference type="UniPathway" id="UPA00139">
    <property type="reaction ID" value="UER00362"/>
</dbReference>
<dbReference type="PRO" id="PR:Q6TGZ5"/>
<dbReference type="Proteomes" id="UP000000437">
    <property type="component" value="Unplaced"/>
</dbReference>
<dbReference type="GO" id="GO:0005789">
    <property type="term" value="C:endoplasmic reticulum membrane"/>
    <property type="evidence" value="ECO:0000318"/>
    <property type="project" value="GO_Central"/>
</dbReference>
<dbReference type="GO" id="GO:0000139">
    <property type="term" value="C:Golgi membrane"/>
    <property type="evidence" value="ECO:0000318"/>
    <property type="project" value="GO_Central"/>
</dbReference>
<dbReference type="GO" id="GO:0003868">
    <property type="term" value="F:4-hydroxyphenylpyruvate dioxygenase activity"/>
    <property type="evidence" value="ECO:0000250"/>
    <property type="project" value="UniProtKB"/>
</dbReference>
<dbReference type="GO" id="GO:0004462">
    <property type="term" value="F:lactoylglutathione lyase activity"/>
    <property type="evidence" value="ECO:0007669"/>
    <property type="project" value="InterPro"/>
</dbReference>
<dbReference type="GO" id="GO:0046872">
    <property type="term" value="F:metal ion binding"/>
    <property type="evidence" value="ECO:0007669"/>
    <property type="project" value="UniProtKB-KW"/>
</dbReference>
<dbReference type="GO" id="GO:0042803">
    <property type="term" value="F:protein homodimerization activity"/>
    <property type="evidence" value="ECO:0000250"/>
    <property type="project" value="UniProtKB"/>
</dbReference>
<dbReference type="GO" id="GO:0006559">
    <property type="term" value="P:L-phenylalanine catabolic process"/>
    <property type="evidence" value="ECO:0007669"/>
    <property type="project" value="UniProtKB-UniPathway"/>
</dbReference>
<dbReference type="GO" id="GO:0006572">
    <property type="term" value="P:tyrosine catabolic process"/>
    <property type="evidence" value="ECO:0000250"/>
    <property type="project" value="UniProtKB"/>
</dbReference>
<dbReference type="CDD" id="cd07250">
    <property type="entry name" value="HPPD_C_like"/>
    <property type="match status" value="1"/>
</dbReference>
<dbReference type="CDD" id="cd08342">
    <property type="entry name" value="HPPD_N_like"/>
    <property type="match status" value="1"/>
</dbReference>
<dbReference type="FunFam" id="3.10.180.10:FF:000008">
    <property type="entry name" value="4-hydroxyphenylpyruvate dioxygenase"/>
    <property type="match status" value="1"/>
</dbReference>
<dbReference type="FunFam" id="3.10.180.10:FF:000022">
    <property type="entry name" value="4-hydroxyphenylpyruvate dioxygenase"/>
    <property type="match status" value="1"/>
</dbReference>
<dbReference type="Gene3D" id="3.10.180.10">
    <property type="entry name" value="2,3-Dihydroxybiphenyl 1,2-Dioxygenase, domain 1"/>
    <property type="match status" value="2"/>
</dbReference>
<dbReference type="InterPro" id="IPR005956">
    <property type="entry name" value="4OHPhenylPyrv_dOase"/>
</dbReference>
<dbReference type="InterPro" id="IPR041735">
    <property type="entry name" value="4OHPhenylPyrv_dOase_C"/>
</dbReference>
<dbReference type="InterPro" id="IPR041736">
    <property type="entry name" value="4OHPhenylPyrv_dOase_N"/>
</dbReference>
<dbReference type="InterPro" id="IPR029068">
    <property type="entry name" value="Glyas_Bleomycin-R_OHBP_Dase"/>
</dbReference>
<dbReference type="InterPro" id="IPR004360">
    <property type="entry name" value="Glyas_Fos-R_dOase_dom"/>
</dbReference>
<dbReference type="InterPro" id="IPR018146">
    <property type="entry name" value="Glyoxalase_1_CS"/>
</dbReference>
<dbReference type="InterPro" id="IPR037523">
    <property type="entry name" value="VOC"/>
</dbReference>
<dbReference type="NCBIfam" id="TIGR01263">
    <property type="entry name" value="4HPPD"/>
    <property type="match status" value="1"/>
</dbReference>
<dbReference type="PANTHER" id="PTHR11959">
    <property type="entry name" value="4-HYDROXYPHENYLPYRUVATE DIOXYGENASE"/>
    <property type="match status" value="1"/>
</dbReference>
<dbReference type="PANTHER" id="PTHR11959:SF11">
    <property type="entry name" value="4-HYDROXYPHENYLPYRUVATE DIOXYGENASE"/>
    <property type="match status" value="1"/>
</dbReference>
<dbReference type="Pfam" id="PF00903">
    <property type="entry name" value="Glyoxalase"/>
    <property type="match status" value="2"/>
</dbReference>
<dbReference type="PIRSF" id="PIRSF009283">
    <property type="entry name" value="HPP_dOase"/>
    <property type="match status" value="1"/>
</dbReference>
<dbReference type="SUPFAM" id="SSF54593">
    <property type="entry name" value="Glyoxalase/Bleomycin resistance protein/Dihydroxybiphenyl dioxygenase"/>
    <property type="match status" value="1"/>
</dbReference>
<dbReference type="PROSITE" id="PS51819">
    <property type="entry name" value="VOC"/>
    <property type="match status" value="2"/>
</dbReference>
<evidence type="ECO:0000250" key="1">
    <source>
        <dbReference type="UniProtKB" id="P32755"/>
    </source>
</evidence>
<evidence type="ECO:0000255" key="2">
    <source>
        <dbReference type="PROSITE-ProRule" id="PRU01163"/>
    </source>
</evidence>
<evidence type="ECO:0000305" key="3"/>
<reference key="1">
    <citation type="journal article" date="2004" name="Proc. Natl. Acad. Sci. U.S.A.">
        <title>Hematopoietic gene expression profile in zebrafish kidney marrow.</title>
        <authorList>
            <person name="Song H.-D."/>
            <person name="Sun X.-J."/>
            <person name="Deng M."/>
            <person name="Zhang G.-W."/>
            <person name="Zhou Y."/>
            <person name="Wu X.-Y."/>
            <person name="Sheng Y."/>
            <person name="Chen Y."/>
            <person name="Ruan Z."/>
            <person name="Jiang C.-L."/>
            <person name="Fan H.-Y."/>
            <person name="Zon L.I."/>
            <person name="Kanki J.P."/>
            <person name="Liu T.X."/>
            <person name="Look A.T."/>
            <person name="Chen Z."/>
        </authorList>
    </citation>
    <scope>NUCLEOTIDE SEQUENCE [LARGE SCALE MRNA]</scope>
    <source>
        <tissue>Kidney marrow</tissue>
    </source>
</reference>
<name>HPPD_DANRE</name>
<gene>
    <name type="primary">hpd</name>
    <name type="ORF">zgc:56326</name>
</gene>
<accession>Q6TGZ5</accession>
<feature type="chain" id="PRO_0000088392" description="4-hydroxyphenylpyruvate dioxygenase">
    <location>
        <begin position="1"/>
        <end position="397"/>
    </location>
</feature>
<feature type="domain" description="VOC 1" evidence="2">
    <location>
        <begin position="18"/>
        <end position="149"/>
    </location>
</feature>
<feature type="domain" description="VOC 2" evidence="2">
    <location>
        <begin position="181"/>
        <end position="339"/>
    </location>
</feature>
<feature type="binding site" evidence="1">
    <location>
        <position position="184"/>
    </location>
    <ligand>
        <name>Fe cation</name>
        <dbReference type="ChEBI" id="CHEBI:24875"/>
    </ligand>
</feature>
<feature type="binding site" evidence="1">
    <location>
        <position position="267"/>
    </location>
    <ligand>
        <name>Fe cation</name>
        <dbReference type="ChEBI" id="CHEBI:24875"/>
    </ligand>
</feature>
<feature type="binding site" evidence="1">
    <location>
        <position position="350"/>
    </location>
    <ligand>
        <name>Fe cation</name>
        <dbReference type="ChEBI" id="CHEBI:24875"/>
    </ligand>
</feature>
<organism>
    <name type="scientific">Danio rerio</name>
    <name type="common">Zebrafish</name>
    <name type="synonym">Brachydanio rerio</name>
    <dbReference type="NCBI Taxonomy" id="7955"/>
    <lineage>
        <taxon>Eukaryota</taxon>
        <taxon>Metazoa</taxon>
        <taxon>Chordata</taxon>
        <taxon>Craniata</taxon>
        <taxon>Vertebrata</taxon>
        <taxon>Euteleostomi</taxon>
        <taxon>Actinopterygii</taxon>
        <taxon>Neopterygii</taxon>
        <taxon>Teleostei</taxon>
        <taxon>Ostariophysi</taxon>
        <taxon>Cypriniformes</taxon>
        <taxon>Danionidae</taxon>
        <taxon>Danioninae</taxon>
        <taxon>Danio</taxon>
    </lineage>
</organism>
<protein>
    <recommendedName>
        <fullName>4-hydroxyphenylpyruvate dioxygenase</fullName>
        <ecNumber evidence="1">1.13.11.27</ecNumber>
    </recommendedName>
    <alternativeName>
        <fullName>4-hydroxyphenylpyruvic acid oxidase</fullName>
        <shortName>4HPPD</shortName>
        <shortName>HPD</shortName>
        <shortName>HPPDase</shortName>
    </alternativeName>
</protein>
<proteinExistence type="evidence at transcript level"/>
<sequence>MTSYTDKGEKPERGKFLNFHHIKFWVGNAKQAAVFYCDKFGFEPLAYKGLETGSREVVSHAVRQDKIIFVFESALNPGNEEMGEHMIKHGDGVKDVAFLVEDCDFLVKKAKERGAAVLKEPWVEQDAGGKVKYAIVQTYGDTTHTFVEYLGPYKGLFLPGYKEPLFRDPLLPKLPSGHLSFIDHIVGNQPDDEMVPVSDWYQKCLLFHRFWSIDDKQIHTEYSALRSIVVTNYEETIKMPINEPAMGKKKSQIQEYIDYNGGPGVQHIALNTSNIIQAIVNLRARGLEFLSAPDNYYESLREKLKTAKIKVKEDLKTLQELKILVDFDDKGYLLQIFTKPVQDRPTLFLEVIQRNNHFGFGAGNFKSLFEAIEKDQDARGNLTVLTAQNQSVSKAFQ</sequence>
<keyword id="KW-0963">Cytoplasm</keyword>
<keyword id="KW-0223">Dioxygenase</keyword>
<keyword id="KW-0256">Endoplasmic reticulum</keyword>
<keyword id="KW-0333">Golgi apparatus</keyword>
<keyword id="KW-0408">Iron</keyword>
<keyword id="KW-0472">Membrane</keyword>
<keyword id="KW-0479">Metal-binding</keyword>
<keyword id="KW-0560">Oxidoreductase</keyword>
<keyword id="KW-0585">Phenylalanine catabolism</keyword>
<keyword id="KW-1185">Reference proteome</keyword>
<keyword id="KW-0677">Repeat</keyword>
<keyword id="KW-0828">Tyrosine catabolism</keyword>